<proteinExistence type="inferred from homology"/>
<protein>
    <recommendedName>
        <fullName evidence="2">Small ribosomal subunit protein uS3c</fullName>
    </recommendedName>
    <alternativeName>
        <fullName>30S ribosomal protein S3, chloroplastic</fullName>
    </alternativeName>
</protein>
<accession>O46900</accession>
<dbReference type="EMBL" id="AF041468">
    <property type="protein sequence ID" value="AAC35709.1"/>
    <property type="molecule type" value="Genomic_DNA"/>
</dbReference>
<dbReference type="RefSeq" id="NP_050775.1">
    <property type="nucleotide sequence ID" value="NC_000926.1"/>
</dbReference>
<dbReference type="SMR" id="O46900"/>
<dbReference type="GeneID" id="857083"/>
<dbReference type="HOGENOM" id="CLU_058591_0_2_1"/>
<dbReference type="OMA" id="WFAQPKK"/>
<dbReference type="GO" id="GO:0009507">
    <property type="term" value="C:chloroplast"/>
    <property type="evidence" value="ECO:0007669"/>
    <property type="project" value="UniProtKB-SubCell"/>
</dbReference>
<dbReference type="GO" id="GO:0022627">
    <property type="term" value="C:cytosolic small ribosomal subunit"/>
    <property type="evidence" value="ECO:0007669"/>
    <property type="project" value="TreeGrafter"/>
</dbReference>
<dbReference type="GO" id="GO:0019843">
    <property type="term" value="F:rRNA binding"/>
    <property type="evidence" value="ECO:0007669"/>
    <property type="project" value="UniProtKB-UniRule"/>
</dbReference>
<dbReference type="GO" id="GO:0003735">
    <property type="term" value="F:structural constituent of ribosome"/>
    <property type="evidence" value="ECO:0007669"/>
    <property type="project" value="InterPro"/>
</dbReference>
<dbReference type="GO" id="GO:0006412">
    <property type="term" value="P:translation"/>
    <property type="evidence" value="ECO:0007669"/>
    <property type="project" value="UniProtKB-UniRule"/>
</dbReference>
<dbReference type="CDD" id="cd02412">
    <property type="entry name" value="KH-II_30S_S3"/>
    <property type="match status" value="1"/>
</dbReference>
<dbReference type="FunFam" id="3.30.300.20:FF:000001">
    <property type="entry name" value="30S ribosomal protein S3"/>
    <property type="match status" value="1"/>
</dbReference>
<dbReference type="Gene3D" id="3.30.300.20">
    <property type="match status" value="1"/>
</dbReference>
<dbReference type="Gene3D" id="3.30.1140.32">
    <property type="entry name" value="Ribosomal protein S3, C-terminal domain"/>
    <property type="match status" value="1"/>
</dbReference>
<dbReference type="HAMAP" id="MF_01309_B">
    <property type="entry name" value="Ribosomal_uS3_B"/>
    <property type="match status" value="1"/>
</dbReference>
<dbReference type="InterPro" id="IPR004087">
    <property type="entry name" value="KH_dom"/>
</dbReference>
<dbReference type="InterPro" id="IPR015946">
    <property type="entry name" value="KH_dom-like_a/b"/>
</dbReference>
<dbReference type="InterPro" id="IPR004044">
    <property type="entry name" value="KH_dom_type_2"/>
</dbReference>
<dbReference type="InterPro" id="IPR009019">
    <property type="entry name" value="KH_sf_prok-type"/>
</dbReference>
<dbReference type="InterPro" id="IPR036419">
    <property type="entry name" value="Ribosomal_S3_C_sf"/>
</dbReference>
<dbReference type="InterPro" id="IPR005704">
    <property type="entry name" value="Ribosomal_uS3_bac-typ"/>
</dbReference>
<dbReference type="InterPro" id="IPR001351">
    <property type="entry name" value="Ribosomal_uS3_C"/>
</dbReference>
<dbReference type="InterPro" id="IPR018280">
    <property type="entry name" value="Ribosomal_uS3_CS"/>
</dbReference>
<dbReference type="NCBIfam" id="TIGR01009">
    <property type="entry name" value="rpsC_bact"/>
    <property type="match status" value="1"/>
</dbReference>
<dbReference type="PANTHER" id="PTHR11760">
    <property type="entry name" value="30S/40S RIBOSOMAL PROTEIN S3"/>
    <property type="match status" value="1"/>
</dbReference>
<dbReference type="PANTHER" id="PTHR11760:SF19">
    <property type="entry name" value="SMALL RIBOSOMAL SUBUNIT PROTEIN US3C"/>
    <property type="match status" value="1"/>
</dbReference>
<dbReference type="Pfam" id="PF07650">
    <property type="entry name" value="KH_2"/>
    <property type="match status" value="1"/>
</dbReference>
<dbReference type="Pfam" id="PF00189">
    <property type="entry name" value="Ribosomal_S3_C"/>
    <property type="match status" value="1"/>
</dbReference>
<dbReference type="SMART" id="SM00322">
    <property type="entry name" value="KH"/>
    <property type="match status" value="1"/>
</dbReference>
<dbReference type="SUPFAM" id="SSF54814">
    <property type="entry name" value="Prokaryotic type KH domain (KH-domain type II)"/>
    <property type="match status" value="1"/>
</dbReference>
<dbReference type="SUPFAM" id="SSF54821">
    <property type="entry name" value="Ribosomal protein S3 C-terminal domain"/>
    <property type="match status" value="1"/>
</dbReference>
<dbReference type="PROSITE" id="PS50823">
    <property type="entry name" value="KH_TYPE_2"/>
    <property type="match status" value="1"/>
</dbReference>
<dbReference type="PROSITE" id="PS00548">
    <property type="entry name" value="RIBOSOMAL_S3"/>
    <property type="match status" value="1"/>
</dbReference>
<comment type="subunit">
    <text evidence="1">Part of the 30S ribosomal subunit.</text>
</comment>
<comment type="subcellular location">
    <subcellularLocation>
        <location>Plastid</location>
        <location>Chloroplast</location>
    </subcellularLocation>
</comment>
<comment type="similarity">
    <text evidence="2">Belongs to the universal ribosomal protein uS3 family.</text>
</comment>
<keyword id="KW-0150">Chloroplast</keyword>
<keyword id="KW-0934">Plastid</keyword>
<keyword id="KW-0687">Ribonucleoprotein</keyword>
<keyword id="KW-0689">Ribosomal protein</keyword>
<keyword id="KW-0694">RNA-binding</keyword>
<keyword id="KW-0699">rRNA-binding</keyword>
<name>RR3_GUITH</name>
<geneLocation type="chloroplast"/>
<sequence length="216" mass="24401">MGQKVNPLGFRLRITSQHRSSWFATKESYPQLLEQDFKIRSYINRELEAAGISKIEISRNANQLEVSVYTSRPGIIVGRSGLGIEKIKTDILRLLKQDISIRINVIELTNPDADANLIGEFIAQQLEKRVAFRRATRQAIQKAQRANVQGIKVQVSGRLNGAEIARSEWVREGRVPLQTLRANIDYATKEAHTTYGILGIKVWVFNGEQTPTYAVI</sequence>
<evidence type="ECO:0000250" key="1"/>
<evidence type="ECO:0000305" key="2"/>
<reference key="1">
    <citation type="journal article" date="1997" name="Biochem. Mol. Biol. Int.">
        <title>The large ribosomal protein gene cluster of a cryptomonad plastid: gene organization, sequence and evolutionary implications.</title>
        <authorList>
            <person name="Wang S.L."/>
            <person name="Liu X.-Q."/>
            <person name="Douglas S.E."/>
        </authorList>
    </citation>
    <scope>NUCLEOTIDE SEQUENCE [GENOMIC DNA]</scope>
</reference>
<reference key="2">
    <citation type="journal article" date="1999" name="J. Mol. Evol.">
        <title>The plastid genome of the cryptophyte alga, Guillardia theta: complete sequence and conserved synteny groups confirm its common ancestry with red algae.</title>
        <authorList>
            <person name="Douglas S.E."/>
            <person name="Penny S.L."/>
        </authorList>
    </citation>
    <scope>NUCLEOTIDE SEQUENCE [LARGE SCALE GENOMIC DNA]</scope>
</reference>
<organism>
    <name type="scientific">Guillardia theta</name>
    <name type="common">Cryptophyte</name>
    <name type="synonym">Cryptomonas phi</name>
    <dbReference type="NCBI Taxonomy" id="55529"/>
    <lineage>
        <taxon>Eukaryota</taxon>
        <taxon>Cryptophyceae</taxon>
        <taxon>Pyrenomonadales</taxon>
        <taxon>Geminigeraceae</taxon>
        <taxon>Guillardia</taxon>
    </lineage>
</organism>
<feature type="chain" id="PRO_0000130284" description="Small ribosomal subunit protein uS3c">
    <location>
        <begin position="1"/>
        <end position="216"/>
    </location>
</feature>
<feature type="domain" description="KH type-2">
    <location>
        <begin position="39"/>
        <end position="109"/>
    </location>
</feature>
<gene>
    <name type="primary">rps3</name>
</gene>